<gene>
    <name type="primary">MSB1</name>
    <name type="ordered locus">YOR188W</name>
</gene>
<accession>P21339</accession>
<accession>D6W2P4</accession>
<keyword id="KW-0597">Phosphoprotein</keyword>
<keyword id="KW-1185">Reference proteome</keyword>
<feature type="chain" id="PRO_0000096588" description="Morphogenesis-related protein MSB1">
    <location>
        <begin position="1"/>
        <end position="1137"/>
    </location>
</feature>
<feature type="region of interest" description="Disordered" evidence="1">
    <location>
        <begin position="1"/>
        <end position="59"/>
    </location>
</feature>
<feature type="region of interest" description="Disordered" evidence="1">
    <location>
        <begin position="483"/>
        <end position="520"/>
    </location>
</feature>
<feature type="region of interest" description="Disordered" evidence="1">
    <location>
        <begin position="577"/>
        <end position="620"/>
    </location>
</feature>
<feature type="region of interest" description="Disordered" evidence="1">
    <location>
        <begin position="736"/>
        <end position="799"/>
    </location>
</feature>
<feature type="region of interest" description="Disordered" evidence="1">
    <location>
        <begin position="814"/>
        <end position="871"/>
    </location>
</feature>
<feature type="compositionally biased region" description="Polar residues" evidence="1">
    <location>
        <begin position="21"/>
        <end position="50"/>
    </location>
</feature>
<feature type="compositionally biased region" description="Basic and acidic residues" evidence="1">
    <location>
        <begin position="593"/>
        <end position="608"/>
    </location>
</feature>
<feature type="compositionally biased region" description="Polar residues" evidence="1">
    <location>
        <begin position="736"/>
        <end position="749"/>
    </location>
</feature>
<feature type="compositionally biased region" description="Basic and acidic residues" evidence="1">
    <location>
        <begin position="750"/>
        <end position="769"/>
    </location>
</feature>
<feature type="compositionally biased region" description="Polar residues" evidence="1">
    <location>
        <begin position="770"/>
        <end position="796"/>
    </location>
</feature>
<feature type="modified residue" description="Phosphoserine" evidence="3 4">
    <location>
        <position position="538"/>
    </location>
</feature>
<feature type="modified residue" description="Phosphoserine" evidence="4">
    <location>
        <position position="776"/>
    </location>
</feature>
<feature type="modified residue" description="Phosphoserine" evidence="3">
    <location>
        <position position="816"/>
    </location>
</feature>
<dbReference type="EMBL" id="M37767">
    <property type="protein sequence ID" value="AAA34797.1"/>
    <property type="molecule type" value="Genomic_DNA"/>
</dbReference>
<dbReference type="EMBL" id="Z75096">
    <property type="protein sequence ID" value="CAA99397.1"/>
    <property type="molecule type" value="Genomic_DNA"/>
</dbReference>
<dbReference type="EMBL" id="BK006948">
    <property type="protein sequence ID" value="DAA10960.1"/>
    <property type="molecule type" value="Genomic_DNA"/>
</dbReference>
<dbReference type="PIR" id="S13759">
    <property type="entry name" value="S13759"/>
</dbReference>
<dbReference type="RefSeq" id="NP_014831.3">
    <property type="nucleotide sequence ID" value="NM_001183607.3"/>
</dbReference>
<dbReference type="BioGRID" id="34583">
    <property type="interactions" value="86"/>
</dbReference>
<dbReference type="DIP" id="DIP-2687N"/>
<dbReference type="FunCoup" id="P21339">
    <property type="interactions" value="113"/>
</dbReference>
<dbReference type="IntAct" id="P21339">
    <property type="interactions" value="8"/>
</dbReference>
<dbReference type="MINT" id="P21339"/>
<dbReference type="STRING" id="4932.YOR188W"/>
<dbReference type="GlyGen" id="P21339">
    <property type="glycosylation" value="1 site"/>
</dbReference>
<dbReference type="iPTMnet" id="P21339"/>
<dbReference type="PaxDb" id="4932-YOR188W"/>
<dbReference type="PeptideAtlas" id="P21339"/>
<dbReference type="EnsemblFungi" id="YOR188W_mRNA">
    <property type="protein sequence ID" value="YOR188W"/>
    <property type="gene ID" value="YOR188W"/>
</dbReference>
<dbReference type="GeneID" id="854360"/>
<dbReference type="KEGG" id="sce:YOR188W"/>
<dbReference type="AGR" id="SGD:S000005714"/>
<dbReference type="SGD" id="S000005714">
    <property type="gene designation" value="MSB1"/>
</dbReference>
<dbReference type="VEuPathDB" id="FungiDB:YOR188W"/>
<dbReference type="eggNOG" id="ENOG502QUEY">
    <property type="taxonomic scope" value="Eukaryota"/>
</dbReference>
<dbReference type="HOGENOM" id="CLU_004952_0_0_1"/>
<dbReference type="InParanoid" id="P21339"/>
<dbReference type="OMA" id="LETHLEM"/>
<dbReference type="OrthoDB" id="3362494at2759"/>
<dbReference type="BioCyc" id="YEAST:G3O-33698-MONOMER"/>
<dbReference type="BioGRID-ORCS" id="854360">
    <property type="hits" value="0 hits in 10 CRISPR screens"/>
</dbReference>
<dbReference type="PRO" id="PR:P21339"/>
<dbReference type="Proteomes" id="UP000002311">
    <property type="component" value="Chromosome XV"/>
</dbReference>
<dbReference type="RNAct" id="P21339">
    <property type="molecule type" value="protein"/>
</dbReference>
<dbReference type="GO" id="GO:0005935">
    <property type="term" value="C:cellular bud neck"/>
    <property type="evidence" value="ECO:0007005"/>
    <property type="project" value="SGD"/>
</dbReference>
<dbReference type="GO" id="GO:0005934">
    <property type="term" value="C:cellular bud tip"/>
    <property type="evidence" value="ECO:0007005"/>
    <property type="project" value="SGD"/>
</dbReference>
<dbReference type="GO" id="GO:0005737">
    <property type="term" value="C:cytoplasm"/>
    <property type="evidence" value="ECO:0007005"/>
    <property type="project" value="SGD"/>
</dbReference>
<dbReference type="GO" id="GO:0005739">
    <property type="term" value="C:mitochondrion"/>
    <property type="evidence" value="ECO:0007005"/>
    <property type="project" value="SGD"/>
</dbReference>
<dbReference type="GO" id="GO:0005886">
    <property type="term" value="C:plasma membrane"/>
    <property type="evidence" value="ECO:0007005"/>
    <property type="project" value="SGD"/>
</dbReference>
<dbReference type="GO" id="GO:0030010">
    <property type="term" value="P:establishment of cell polarity"/>
    <property type="evidence" value="ECO:0000316"/>
    <property type="project" value="SGD"/>
</dbReference>
<dbReference type="CDD" id="cd04401">
    <property type="entry name" value="RhoGAP_fMSB1"/>
    <property type="match status" value="1"/>
</dbReference>
<dbReference type="InterPro" id="IPR037508">
    <property type="entry name" value="Msb1/Mug8"/>
</dbReference>
<dbReference type="InterPro" id="IPR012965">
    <property type="entry name" value="Msb1/Mug8_dom"/>
</dbReference>
<dbReference type="PANTHER" id="PTHR28093">
    <property type="entry name" value="MORPHOGENESIS-RELATED PROTEIN MSB1"/>
    <property type="match status" value="1"/>
</dbReference>
<dbReference type="PANTHER" id="PTHR28093:SF1">
    <property type="entry name" value="MORPHOGENESIS-RELATED PROTEIN MSB1"/>
    <property type="match status" value="1"/>
</dbReference>
<dbReference type="Pfam" id="PF08101">
    <property type="entry name" value="Msb1-Mug8_dom"/>
    <property type="match status" value="1"/>
</dbReference>
<sequence length="1137" mass="129971">MNDMAKPLPTPPTAEIRKSRSNSPKKAQKTNLSPNKNQNNEKNVPRSNGRTKNEHNSMDDEEFEFFHQFSREKVKGVIHVITAELKEKGPDVEFLMIPFRPEQTNDKLLTLLNQLFPLGNGQPVNEKKQLRIVSKADVWTLFQCLKYIWCRLPNSEIIGWKSYLEFKFREEDKKFPRKSFLEIMPQCLASPNHASIVYDFFDLIISISSNSRVNKMSARKISKMCAIWAFSKQIPNSDIQDYDFESAAMKSFAPNNSIQDGLDQWIPASDAMFHLLLAFLRSFVPQDLESAKLPRTLKSLLFNNQYPPRKSTAYTSETILTIPLVTLKTDVFSRKPWQLLERCNDLLDFSDHDAFEAREDYALLKSLFRKKNTVEGISRKMSQESRRLMKAMSTKHSTFQPGWAPRECIENISHLKECIEVKRLDIDDYFIWTWLSSLSFEQTSEKKKIFGRSIILEFEFDGFKKWVVFQECDITLDYNKKGQLKKKTSAQSPTTEKELPPDDFELEDPPLSKSPTLSQTYKKFQAEVPQQSTVRRDSAPDNQGIYHTVISKNALTKNKHNVNLHSFEHKISKWNPLNNLRKKSGSNSSSSSFEEKSKDAPIREEYHTNKNHKSKKEERVLSQFSTLNPDEYQLPVIETGSSNFKIEIPELMYEHDDDDSDKLKNSQKRATDSAIEELNGMVEEMMINEPDDVKISITEAETFESLTKFDQYKPSNITDDDLQSSHSSAVHSLKLSTNTNDSCADSSKYTADRKLAEPRKISEESKVNDDSSSYYSPNINNLPASRMPSQPTYSNSDSKKAFTNESRLNVLQGAVSPSQQVTPKPYKNAPGDCVSPVQQKYYQNDRRNEMSPASAPVPPSAYSPARSPQFSTNSAGFKQNTINVPVGYNDPAHVLANQPHMTYRDQHNYPSHQQKQRPFQNNIVPPELKSRNQRADASPIPQHMVPVKQGVPNLPSNVPLYQQMERMNPNHQHPVNTYKVTQPPYHNNTTNAYGNSRAGNAHMLDGKWSNNPPQMVPKGVRPNQYPQQHVNRYSPQAQPVVPAEYYNGPPPMRAPPMMSHMVPAQEPIRYTAGANRRSFPQGMQQNAYSVPAQPMGAVNSEFYLPEAPQGNKLHGNINKRQERKKLYDNIRSGNFGI</sequence>
<reference key="1">
    <citation type="journal article" date="1991" name="Mol. Cell. Biol.">
        <title>Use of a screen for synthetic lethal and multicopy suppressee mutants to identify two new genes involved in morphogenesis in Saccharomyces cerevisiae.</title>
        <authorList>
            <person name="Bender A."/>
            <person name="Pringle J.R."/>
        </authorList>
    </citation>
    <scope>NUCLEOTIDE SEQUENCE [GENOMIC DNA]</scope>
</reference>
<reference key="2">
    <citation type="journal article" date="1997" name="Nature">
        <title>The nucleotide sequence of Saccharomyces cerevisiae chromosome XV.</title>
        <authorList>
            <person name="Dujon B."/>
            <person name="Albermann K."/>
            <person name="Aldea M."/>
            <person name="Alexandraki D."/>
            <person name="Ansorge W."/>
            <person name="Arino J."/>
            <person name="Benes V."/>
            <person name="Bohn C."/>
            <person name="Bolotin-Fukuhara M."/>
            <person name="Bordonne R."/>
            <person name="Boyer J."/>
            <person name="Camasses A."/>
            <person name="Casamayor A."/>
            <person name="Casas C."/>
            <person name="Cheret G."/>
            <person name="Cziepluch C."/>
            <person name="Daignan-Fornier B."/>
            <person name="Dang V.-D."/>
            <person name="de Haan M."/>
            <person name="Delius H."/>
            <person name="Durand P."/>
            <person name="Fairhead C."/>
            <person name="Feldmann H."/>
            <person name="Gaillon L."/>
            <person name="Galisson F."/>
            <person name="Gamo F.-J."/>
            <person name="Gancedo C."/>
            <person name="Goffeau A."/>
            <person name="Goulding S.E."/>
            <person name="Grivell L.A."/>
            <person name="Habbig B."/>
            <person name="Hand N.J."/>
            <person name="Hani J."/>
            <person name="Hattenhorst U."/>
            <person name="Hebling U."/>
            <person name="Hernando Y."/>
            <person name="Herrero E."/>
            <person name="Heumann K."/>
            <person name="Hiesel R."/>
            <person name="Hilger F."/>
            <person name="Hofmann B."/>
            <person name="Hollenberg C.P."/>
            <person name="Hughes B."/>
            <person name="Jauniaux J.-C."/>
            <person name="Kalogeropoulos A."/>
            <person name="Katsoulou C."/>
            <person name="Kordes E."/>
            <person name="Lafuente M.J."/>
            <person name="Landt O."/>
            <person name="Louis E.J."/>
            <person name="Maarse A.C."/>
            <person name="Madania A."/>
            <person name="Mannhaupt G."/>
            <person name="Marck C."/>
            <person name="Martin R.P."/>
            <person name="Mewes H.-W."/>
            <person name="Michaux G."/>
            <person name="Paces V."/>
            <person name="Parle-McDermott A.G."/>
            <person name="Pearson B.M."/>
            <person name="Perrin A."/>
            <person name="Pettersson B."/>
            <person name="Poch O."/>
            <person name="Pohl T.M."/>
            <person name="Poirey R."/>
            <person name="Portetelle D."/>
            <person name="Pujol A."/>
            <person name="Purnelle B."/>
            <person name="Ramezani Rad M."/>
            <person name="Rechmann S."/>
            <person name="Schwager C."/>
            <person name="Schweizer M."/>
            <person name="Sor F."/>
            <person name="Sterky F."/>
            <person name="Tarassov I.A."/>
            <person name="Teodoru C."/>
            <person name="Tettelin H."/>
            <person name="Thierry A."/>
            <person name="Tobiasch E."/>
            <person name="Tzermia M."/>
            <person name="Uhlen M."/>
            <person name="Unseld M."/>
            <person name="Valens M."/>
            <person name="Vandenbol M."/>
            <person name="Vetter I."/>
            <person name="Vlcek C."/>
            <person name="Voet M."/>
            <person name="Volckaert G."/>
            <person name="Voss H."/>
            <person name="Wambutt R."/>
            <person name="Wedler H."/>
            <person name="Wiemann S."/>
            <person name="Winsor B."/>
            <person name="Wolfe K.H."/>
            <person name="Zollner A."/>
            <person name="Zumstein E."/>
            <person name="Kleine K."/>
        </authorList>
    </citation>
    <scope>NUCLEOTIDE SEQUENCE [LARGE SCALE GENOMIC DNA]</scope>
    <source>
        <strain>ATCC 204508 / S288c</strain>
    </source>
</reference>
<reference key="3">
    <citation type="journal article" date="2014" name="G3 (Bethesda)">
        <title>The reference genome sequence of Saccharomyces cerevisiae: Then and now.</title>
        <authorList>
            <person name="Engel S.R."/>
            <person name="Dietrich F.S."/>
            <person name="Fisk D.G."/>
            <person name="Binkley G."/>
            <person name="Balakrishnan R."/>
            <person name="Costanzo M.C."/>
            <person name="Dwight S.S."/>
            <person name="Hitz B.C."/>
            <person name="Karra K."/>
            <person name="Nash R.S."/>
            <person name="Weng S."/>
            <person name="Wong E.D."/>
            <person name="Lloyd P."/>
            <person name="Skrzypek M.S."/>
            <person name="Miyasato S.R."/>
            <person name="Simison M."/>
            <person name="Cherry J.M."/>
        </authorList>
    </citation>
    <scope>GENOME REANNOTATION</scope>
    <source>
        <strain>ATCC 204508 / S288c</strain>
    </source>
</reference>
<reference key="4">
    <citation type="journal article" date="2003" name="Nature">
        <title>Global analysis of protein expression in yeast.</title>
        <authorList>
            <person name="Ghaemmaghami S."/>
            <person name="Huh W.-K."/>
            <person name="Bower K."/>
            <person name="Howson R.W."/>
            <person name="Belle A."/>
            <person name="Dephoure N."/>
            <person name="O'Shea E.K."/>
            <person name="Weissman J.S."/>
        </authorList>
    </citation>
    <scope>LEVEL OF PROTEIN EXPRESSION [LARGE SCALE ANALYSIS]</scope>
</reference>
<reference key="5">
    <citation type="journal article" date="2007" name="J. Proteome Res.">
        <title>Large-scale phosphorylation analysis of alpha-factor-arrested Saccharomyces cerevisiae.</title>
        <authorList>
            <person name="Li X."/>
            <person name="Gerber S.A."/>
            <person name="Rudner A.D."/>
            <person name="Beausoleil S.A."/>
            <person name="Haas W."/>
            <person name="Villen J."/>
            <person name="Elias J.E."/>
            <person name="Gygi S.P."/>
        </authorList>
    </citation>
    <scope>PHOSPHORYLATION [LARGE SCALE ANALYSIS] AT SER-538 AND SER-816</scope>
    <scope>IDENTIFICATION BY MASS SPECTROMETRY [LARGE SCALE ANALYSIS]</scope>
    <source>
        <strain>ADR376</strain>
    </source>
</reference>
<reference key="6">
    <citation type="journal article" date="2008" name="Mol. Cell. Proteomics">
        <title>A multidimensional chromatography technology for in-depth phosphoproteome analysis.</title>
        <authorList>
            <person name="Albuquerque C.P."/>
            <person name="Smolka M.B."/>
            <person name="Payne S.H."/>
            <person name="Bafna V."/>
            <person name="Eng J."/>
            <person name="Zhou H."/>
        </authorList>
    </citation>
    <scope>IDENTIFICATION BY MASS SPECTROMETRY [LARGE SCALE ANALYSIS]</scope>
</reference>
<reference key="7">
    <citation type="journal article" date="2009" name="Science">
        <title>Global analysis of Cdk1 substrate phosphorylation sites provides insights into evolution.</title>
        <authorList>
            <person name="Holt L.J."/>
            <person name="Tuch B.B."/>
            <person name="Villen J."/>
            <person name="Johnson A.D."/>
            <person name="Gygi S.P."/>
            <person name="Morgan D.O."/>
        </authorList>
    </citation>
    <scope>PHOSPHORYLATION [LARGE SCALE ANALYSIS] AT SER-538 AND SER-776</scope>
    <scope>IDENTIFICATION BY MASS SPECTROMETRY [LARGE SCALE ANALYSIS]</scope>
</reference>
<proteinExistence type="evidence at protein level"/>
<evidence type="ECO:0000256" key="1">
    <source>
        <dbReference type="SAM" id="MobiDB-lite"/>
    </source>
</evidence>
<evidence type="ECO:0000269" key="2">
    <source>
    </source>
</evidence>
<evidence type="ECO:0007744" key="3">
    <source>
    </source>
</evidence>
<evidence type="ECO:0007744" key="4">
    <source>
    </source>
</evidence>
<organism>
    <name type="scientific">Saccharomyces cerevisiae (strain ATCC 204508 / S288c)</name>
    <name type="common">Baker's yeast</name>
    <dbReference type="NCBI Taxonomy" id="559292"/>
    <lineage>
        <taxon>Eukaryota</taxon>
        <taxon>Fungi</taxon>
        <taxon>Dikarya</taxon>
        <taxon>Ascomycota</taxon>
        <taxon>Saccharomycotina</taxon>
        <taxon>Saccharomycetes</taxon>
        <taxon>Saccharomycetales</taxon>
        <taxon>Saccharomycetaceae</taxon>
        <taxon>Saccharomyces</taxon>
    </lineage>
</organism>
<comment type="function">
    <text>May play a role in polarity establishment and bud formation. The MSB1 gene may be functionally redundant.</text>
</comment>
<comment type="interaction">
    <interactant intactId="EBI-11322">
        <id>P21339</id>
    </interactant>
    <interactant intactId="EBI-18140">
        <id>P40073</id>
        <label>SHO1</label>
    </interactant>
    <organismsDiffer>false</organismsDiffer>
    <experiments>2</experiments>
</comment>
<comment type="miscellaneous">
    <text evidence="2">Present with 172 molecules/cell in log phase SD medium.</text>
</comment>
<protein>
    <recommendedName>
        <fullName>Morphogenesis-related protein MSB1</fullName>
    </recommendedName>
    <alternativeName>
        <fullName>Multicopy suppressor of bud emergence 1</fullName>
    </alternativeName>
</protein>
<name>MSB1_YEAST</name>